<organism>
    <name type="scientific">Escherichia coli O127:H6 (strain E2348/69 / EPEC)</name>
    <dbReference type="NCBI Taxonomy" id="574521"/>
    <lineage>
        <taxon>Bacteria</taxon>
        <taxon>Pseudomonadati</taxon>
        <taxon>Pseudomonadota</taxon>
        <taxon>Gammaproteobacteria</taxon>
        <taxon>Enterobacterales</taxon>
        <taxon>Enterobacteriaceae</taxon>
        <taxon>Escherichia</taxon>
    </lineage>
</organism>
<evidence type="ECO:0000255" key="1">
    <source>
        <dbReference type="HAMAP-Rule" id="MF_01371"/>
    </source>
</evidence>
<evidence type="ECO:0000305" key="2"/>
<accession>B7UK26</accession>
<reference key="1">
    <citation type="journal article" date="2009" name="J. Bacteriol.">
        <title>Complete genome sequence and comparative genome analysis of enteropathogenic Escherichia coli O127:H6 strain E2348/69.</title>
        <authorList>
            <person name="Iguchi A."/>
            <person name="Thomson N.R."/>
            <person name="Ogura Y."/>
            <person name="Saunders D."/>
            <person name="Ooka T."/>
            <person name="Henderson I.R."/>
            <person name="Harris D."/>
            <person name="Asadulghani M."/>
            <person name="Kurokawa K."/>
            <person name="Dean P."/>
            <person name="Kenny B."/>
            <person name="Quail M.A."/>
            <person name="Thurston S."/>
            <person name="Dougan G."/>
            <person name="Hayashi T."/>
            <person name="Parkhill J."/>
            <person name="Frankel G."/>
        </authorList>
    </citation>
    <scope>NUCLEOTIDE SEQUENCE [LARGE SCALE GENOMIC DNA]</scope>
    <source>
        <strain>E2348/69 / EPEC</strain>
    </source>
</reference>
<protein>
    <recommendedName>
        <fullName evidence="1">Large ribosomal subunit protein uL30</fullName>
    </recommendedName>
    <alternativeName>
        <fullName evidence="2">50S ribosomal protein L30</fullName>
    </alternativeName>
</protein>
<proteinExistence type="inferred from homology"/>
<gene>
    <name evidence="1" type="primary">rpmD</name>
    <name type="ordered locus">E2348C_3565</name>
</gene>
<keyword id="KW-1185">Reference proteome</keyword>
<keyword id="KW-0687">Ribonucleoprotein</keyword>
<keyword id="KW-0689">Ribosomal protein</keyword>
<dbReference type="EMBL" id="FM180568">
    <property type="protein sequence ID" value="CAS11113.1"/>
    <property type="molecule type" value="Genomic_DNA"/>
</dbReference>
<dbReference type="RefSeq" id="WP_001140433.1">
    <property type="nucleotide sequence ID" value="NC_011601.1"/>
</dbReference>
<dbReference type="SMR" id="B7UK26"/>
<dbReference type="GeneID" id="93778685"/>
<dbReference type="KEGG" id="ecg:E2348C_3565"/>
<dbReference type="HOGENOM" id="CLU_131047_1_4_6"/>
<dbReference type="Proteomes" id="UP000008205">
    <property type="component" value="Chromosome"/>
</dbReference>
<dbReference type="GO" id="GO:0022625">
    <property type="term" value="C:cytosolic large ribosomal subunit"/>
    <property type="evidence" value="ECO:0007669"/>
    <property type="project" value="TreeGrafter"/>
</dbReference>
<dbReference type="GO" id="GO:0003735">
    <property type="term" value="F:structural constituent of ribosome"/>
    <property type="evidence" value="ECO:0007669"/>
    <property type="project" value="InterPro"/>
</dbReference>
<dbReference type="GO" id="GO:0006412">
    <property type="term" value="P:translation"/>
    <property type="evidence" value="ECO:0007669"/>
    <property type="project" value="UniProtKB-UniRule"/>
</dbReference>
<dbReference type="CDD" id="cd01658">
    <property type="entry name" value="Ribosomal_L30"/>
    <property type="match status" value="1"/>
</dbReference>
<dbReference type="FunFam" id="3.30.1390.20:FF:000001">
    <property type="entry name" value="50S ribosomal protein L30"/>
    <property type="match status" value="1"/>
</dbReference>
<dbReference type="Gene3D" id="3.30.1390.20">
    <property type="entry name" value="Ribosomal protein L30, ferredoxin-like fold domain"/>
    <property type="match status" value="1"/>
</dbReference>
<dbReference type="HAMAP" id="MF_01371_B">
    <property type="entry name" value="Ribosomal_uL30_B"/>
    <property type="match status" value="1"/>
</dbReference>
<dbReference type="InterPro" id="IPR036919">
    <property type="entry name" value="Ribo_uL30_ferredoxin-like_sf"/>
</dbReference>
<dbReference type="InterPro" id="IPR005996">
    <property type="entry name" value="Ribosomal_uL30_bac-type"/>
</dbReference>
<dbReference type="InterPro" id="IPR018038">
    <property type="entry name" value="Ribosomal_uL30_CS"/>
</dbReference>
<dbReference type="InterPro" id="IPR016082">
    <property type="entry name" value="Ribosomal_uL30_ferredoxin-like"/>
</dbReference>
<dbReference type="NCBIfam" id="TIGR01308">
    <property type="entry name" value="rpmD_bact"/>
    <property type="match status" value="1"/>
</dbReference>
<dbReference type="PANTHER" id="PTHR15892:SF2">
    <property type="entry name" value="LARGE RIBOSOMAL SUBUNIT PROTEIN UL30M"/>
    <property type="match status" value="1"/>
</dbReference>
<dbReference type="PANTHER" id="PTHR15892">
    <property type="entry name" value="MITOCHONDRIAL RIBOSOMAL PROTEIN L30"/>
    <property type="match status" value="1"/>
</dbReference>
<dbReference type="Pfam" id="PF00327">
    <property type="entry name" value="Ribosomal_L30"/>
    <property type="match status" value="1"/>
</dbReference>
<dbReference type="PIRSF" id="PIRSF002211">
    <property type="entry name" value="Ribosomal_L30_bac-type"/>
    <property type="match status" value="1"/>
</dbReference>
<dbReference type="SUPFAM" id="SSF55129">
    <property type="entry name" value="Ribosomal protein L30p/L7e"/>
    <property type="match status" value="1"/>
</dbReference>
<dbReference type="PROSITE" id="PS00634">
    <property type="entry name" value="RIBOSOMAL_L30"/>
    <property type="match status" value="1"/>
</dbReference>
<feature type="chain" id="PRO_1000184142" description="Large ribosomal subunit protein uL30">
    <location>
        <begin position="1"/>
        <end position="59"/>
    </location>
</feature>
<comment type="subunit">
    <text evidence="1">Part of the 50S ribosomal subunit.</text>
</comment>
<comment type="similarity">
    <text evidence="1">Belongs to the universal ribosomal protein uL30 family.</text>
</comment>
<sequence>MAKTIKITQTRSAIGRLPKHKATLLGLGLRRIGHTVEREDTPAIRGMINAVSFMVKVEE</sequence>
<name>RL30_ECO27</name>